<gene>
    <name type="primary">OPG135</name>
    <name type="ORF">MPXVgp120</name>
</gene>
<dbReference type="EMBL" id="MT903340">
    <property type="protein sequence ID" value="QNP12990.1"/>
    <property type="molecule type" value="Genomic_DNA"/>
</dbReference>
<dbReference type="RefSeq" id="YP_010377117.1">
    <property type="nucleotide sequence ID" value="NC_063383.1"/>
</dbReference>
<dbReference type="SMR" id="A0A7H0DNA7"/>
<dbReference type="GeneID" id="72551530"/>
<dbReference type="Proteomes" id="UP000516359">
    <property type="component" value="Genome"/>
</dbReference>
<dbReference type="GO" id="GO:0030430">
    <property type="term" value="C:host cell cytoplasm"/>
    <property type="evidence" value="ECO:0007669"/>
    <property type="project" value="UniProtKB-SubCell"/>
</dbReference>
<dbReference type="GO" id="GO:0016020">
    <property type="term" value="C:membrane"/>
    <property type="evidence" value="ECO:0007669"/>
    <property type="project" value="UniProtKB-KW"/>
</dbReference>
<dbReference type="GO" id="GO:0055036">
    <property type="term" value="C:virion membrane"/>
    <property type="evidence" value="ECO:0007669"/>
    <property type="project" value="UniProtKB-SubCell"/>
</dbReference>
<dbReference type="InterPro" id="IPR006920">
    <property type="entry name" value="Poxvirus_A9"/>
</dbReference>
<dbReference type="Pfam" id="PF04835">
    <property type="entry name" value="Pox_A9"/>
    <property type="match status" value="1"/>
</dbReference>
<organism>
    <name type="scientific">Monkeypox virus</name>
    <dbReference type="NCBI Taxonomy" id="10244"/>
    <lineage>
        <taxon>Viruses</taxon>
        <taxon>Varidnaviria</taxon>
        <taxon>Bamfordvirae</taxon>
        <taxon>Nucleocytoviricota</taxon>
        <taxon>Pokkesviricetes</taxon>
        <taxon>Chitovirales</taxon>
        <taxon>Poxviridae</taxon>
        <taxon>Chordopoxvirinae</taxon>
        <taxon>Orthopoxvirus</taxon>
    </lineage>
</organism>
<proteinExistence type="evidence at transcript level"/>
<name>PG135_MONPV</name>
<organismHost>
    <name type="scientific">Cynomys gunnisoni</name>
    <name type="common">Gunnison's prairie dog</name>
    <name type="synonym">Spermophilus gunnisoni</name>
    <dbReference type="NCBI Taxonomy" id="45479"/>
</organismHost>
<organismHost>
    <name type="scientific">Cynomys leucurus</name>
    <name type="common">White-tailed prairie dog</name>
    <dbReference type="NCBI Taxonomy" id="99825"/>
</organismHost>
<organismHost>
    <name type="scientific">Cynomys ludovicianus</name>
    <name type="common">Black-tailed prairie dog</name>
    <dbReference type="NCBI Taxonomy" id="45480"/>
</organismHost>
<organismHost>
    <name type="scientific">Cynomys mexicanus</name>
    <name type="common">Mexican prairie dog</name>
    <dbReference type="NCBI Taxonomy" id="99826"/>
</organismHost>
<organismHost>
    <name type="scientific">Cynomys parvidens</name>
    <name type="common">Utah prairie dog</name>
    <dbReference type="NCBI Taxonomy" id="99827"/>
</organismHost>
<organismHost>
    <name type="scientific">Gliridae</name>
    <name type="common">dormice</name>
    <dbReference type="NCBI Taxonomy" id="30650"/>
</organismHost>
<organismHost>
    <name type="scientific">Heliosciurus ruwenzorii</name>
    <name type="common">Ruwenzori sun squirrel</name>
    <dbReference type="NCBI Taxonomy" id="226685"/>
</organismHost>
<organismHost>
    <name type="scientific">Homo sapiens</name>
    <name type="common">Human</name>
    <dbReference type="NCBI Taxonomy" id="9606"/>
</organismHost>
<organismHost>
    <name type="scientific">Mus musculus</name>
    <name type="common">Mouse</name>
    <dbReference type="NCBI Taxonomy" id="10090"/>
</organismHost>
<protein>
    <recommendedName>
        <fullName>Virion membrane protein OPG135</fullName>
    </recommendedName>
</protein>
<reference key="1">
    <citation type="journal article" date="2022" name="J. Infect. Dis.">
        <title>Exportation of Monkeypox virus from the African continent.</title>
        <authorList>
            <person name="Mauldin M.R."/>
            <person name="McCollum A.M."/>
            <person name="Nakazawa Y.J."/>
            <person name="Mandra A."/>
            <person name="Whitehouse E.R."/>
            <person name="Davidson W."/>
            <person name="Zhao H."/>
            <person name="Gao J."/>
            <person name="Li Y."/>
            <person name="Doty J."/>
            <person name="Yinka-Ogunleye A."/>
            <person name="Akinpelu A."/>
            <person name="Aruna O."/>
            <person name="Naidoo D."/>
            <person name="Lewandowski K."/>
            <person name="Afrough B."/>
            <person name="Graham V."/>
            <person name="Aarons E."/>
            <person name="Hewson R."/>
            <person name="Vipond R."/>
            <person name="Dunning J."/>
            <person name="Chand M."/>
            <person name="Brown C."/>
            <person name="Cohen-Gihon I."/>
            <person name="Erez N."/>
            <person name="Shifman O."/>
            <person name="Israeli O."/>
            <person name="Sharon M."/>
            <person name="Schwartz E."/>
            <person name="Beth-Din A."/>
            <person name="Zvi A."/>
            <person name="Mak T.M."/>
            <person name="Ng Y.K."/>
            <person name="Cui L."/>
            <person name="Lin R.T.P."/>
            <person name="Olson V.A."/>
            <person name="Brooks T."/>
            <person name="Paran N."/>
            <person name="Ihekweazu C."/>
            <person name="Reynolds M.G."/>
        </authorList>
    </citation>
    <scope>NUCLEOTIDE SEQUENCE [LARGE SCALE GENOMIC DNA]</scope>
    <source>
        <strain>MPXV-M5312_HM12_Rivers</strain>
    </source>
</reference>
<accession>A0A7H0DNA7</accession>
<comment type="function">
    <text evidence="1">Envelope protein. Required for an early step in virion morphogenesis.</text>
</comment>
<comment type="subcellular location">
    <subcellularLocation>
        <location evidence="1">Virion membrane</location>
        <topology evidence="1">Single-pass membrane protein</topology>
    </subcellularLocation>
    <subcellularLocation>
        <location evidence="1">Host cytoplasm</location>
    </subcellularLocation>
    <text evidence="1">Component of the mature virion (MV) membrane. The mature virion is located in the cytoplasm of infected cells and is probably released by cell lysis. Also found in cytoplasmic virus factories.</text>
</comment>
<comment type="induction">
    <text>Expressed in the late phase of the viral replicative cycle.</text>
</comment>
<comment type="similarity">
    <text evidence="5">Belongs to the chordopoxvirinae A9 family.</text>
</comment>
<sequence>MSCYTAILKSVGGLALFQVANGAIDLCRHFFMYFCEQKLRPNSFWFVVVRAIASMIMYLVLGIALLYISEQDDKKNTNNDSNSNNDKRNVSSINSNSSHK</sequence>
<feature type="signal peptide" evidence="2">
    <location>
        <begin position="1"/>
        <end position="22"/>
    </location>
</feature>
<feature type="chain" id="PRO_0000457506" description="Virion membrane protein OPG135" evidence="2">
    <location>
        <begin position="23"/>
        <end position="100"/>
    </location>
</feature>
<feature type="topological domain" description="Intravirion" evidence="2">
    <location>
        <begin position="23"/>
        <end position="45"/>
    </location>
</feature>
<feature type="transmembrane region" description="Helical" evidence="2">
    <location>
        <begin position="46"/>
        <end position="66"/>
    </location>
</feature>
<feature type="topological domain" description="Virion surface" evidence="2">
    <location>
        <begin position="67"/>
        <end position="83"/>
    </location>
</feature>
<feature type="region of interest" description="Disordered" evidence="4">
    <location>
        <begin position="75"/>
        <end position="100"/>
    </location>
</feature>
<feature type="glycosylation site" description="N-linked (GlcNAc...) asparagine; by host" evidence="3">
    <location>
        <position position="79"/>
    </location>
</feature>
<feature type="glycosylation site" description="N-linked (GlcNAc...) asparagine; by host" evidence="3">
    <location>
        <position position="89"/>
    </location>
</feature>
<feature type="glycosylation site" description="N-linked (GlcNAc...) asparagine; by host" evidence="3">
    <location>
        <position position="96"/>
    </location>
</feature>
<evidence type="ECO:0000250" key="1">
    <source>
        <dbReference type="UniProtKB" id="Q85320"/>
    </source>
</evidence>
<evidence type="ECO:0000255" key="2"/>
<evidence type="ECO:0000255" key="3">
    <source>
        <dbReference type="PROSITE-ProRule" id="PRU00498"/>
    </source>
</evidence>
<evidence type="ECO:0000256" key="4">
    <source>
        <dbReference type="SAM" id="MobiDB-lite"/>
    </source>
</evidence>
<evidence type="ECO:0000305" key="5"/>
<keyword id="KW-0325">Glycoprotein</keyword>
<keyword id="KW-1035">Host cytoplasm</keyword>
<keyword id="KW-0426">Late protein</keyword>
<keyword id="KW-0472">Membrane</keyword>
<keyword id="KW-1185">Reference proteome</keyword>
<keyword id="KW-0732">Signal</keyword>
<keyword id="KW-0812">Transmembrane</keyword>
<keyword id="KW-1133">Transmembrane helix</keyword>
<keyword id="KW-0946">Virion</keyword>